<organism>
    <name type="scientific">Homo sapiens</name>
    <name type="common">Human</name>
    <dbReference type="NCBI Taxonomy" id="9606"/>
    <lineage>
        <taxon>Eukaryota</taxon>
        <taxon>Metazoa</taxon>
        <taxon>Chordata</taxon>
        <taxon>Craniata</taxon>
        <taxon>Vertebrata</taxon>
        <taxon>Euteleostomi</taxon>
        <taxon>Mammalia</taxon>
        <taxon>Eutheria</taxon>
        <taxon>Euarchontoglires</taxon>
        <taxon>Primates</taxon>
        <taxon>Haplorrhini</taxon>
        <taxon>Catarrhini</taxon>
        <taxon>Hominidae</taxon>
        <taxon>Homo</taxon>
    </lineage>
</organism>
<evidence type="ECO:0000255" key="1">
    <source>
        <dbReference type="PROSITE-ProRule" id="PRU00108"/>
    </source>
</evidence>
<evidence type="ECO:0000256" key="2">
    <source>
        <dbReference type="SAM" id="MobiDB-lite"/>
    </source>
</evidence>
<evidence type="ECO:0000269" key="3">
    <source>
    </source>
</evidence>
<evidence type="ECO:0000269" key="4">
    <source>
    </source>
</evidence>
<evidence type="ECO:0000269" key="5">
    <source>
    </source>
</evidence>
<evidence type="ECO:0000269" key="6">
    <source>
    </source>
</evidence>
<evidence type="ECO:0000269" key="7">
    <source>
    </source>
</evidence>
<evidence type="ECO:0000303" key="8">
    <source>
    </source>
</evidence>
<evidence type="ECO:0000305" key="9"/>
<evidence type="ECO:0007829" key="10">
    <source>
        <dbReference type="PDB" id="1B72"/>
    </source>
</evidence>
<gene>
    <name type="primary">HOXB1</name>
    <name type="synonym">HOX2I</name>
</gene>
<sequence>MDYNRMNSFLEYPLCNRGPSAYSAHSAPTSFPPSSAQAVDSYASEGRYGGGLSSPAFQQNSGYPAQQPPSTLGVPFPSSAPSGYAPAACSPSYGPSQYYPLGQSEGDGGYFHPSSYGAQLGGLSDGYGAGGAGPGPYPPQHPPYGNEQTASFAPAYADLLSEDKETPCPSEPNTPTARTFDWMKVKRNPPKTAKVSEPGLGSPSGLRTNFTTRQLTELEKEFHFNKYLSRARRVEIAATLELNETQVKIWFQNRRMKQKKREREEGRVPPAPPGCPKEAAGDASDQSTCTSPEASPSSVTS</sequence>
<name>HXB1_HUMAN</name>
<feature type="chain" id="PRO_0000200107" description="Homeobox protein Hox-B1">
    <location>
        <begin position="1"/>
        <end position="301"/>
    </location>
</feature>
<feature type="DNA-binding region" description="Homeobox" evidence="1">
    <location>
        <begin position="203"/>
        <end position="262"/>
    </location>
</feature>
<feature type="region of interest" description="Disordered" evidence="2">
    <location>
        <begin position="20"/>
        <end position="77"/>
    </location>
</feature>
<feature type="region of interest" description="Disordered" evidence="2">
    <location>
        <begin position="127"/>
        <end position="149"/>
    </location>
</feature>
<feature type="region of interest" description="Disordered" evidence="2">
    <location>
        <begin position="254"/>
        <end position="301"/>
    </location>
</feature>
<feature type="short sequence motif" description="Antp-type hexapeptide">
    <location>
        <begin position="179"/>
        <end position="184"/>
    </location>
</feature>
<feature type="compositionally biased region" description="Polar residues" evidence="2">
    <location>
        <begin position="26"/>
        <end position="38"/>
    </location>
</feature>
<feature type="compositionally biased region" description="Polar residues" evidence="2">
    <location>
        <begin position="55"/>
        <end position="70"/>
    </location>
</feature>
<feature type="compositionally biased region" description="Polar residues" evidence="2">
    <location>
        <begin position="284"/>
        <end position="301"/>
    </location>
</feature>
<feature type="splice variant" id="VSP_056813" description="In isoform 2." evidence="8">
    <original>AKVSEPGLGSPSGLRTNFTTRQLTELEKEFHFNKYLSRAR</original>
    <variation>GRAQMWPPLLRGPKHLCFPCSDMSWVWAGFFSFSGSGRHR</variation>
    <location>
        <begin position="193"/>
        <end position="232"/>
    </location>
</feature>
<feature type="splice variant" id="VSP_056814" description="In isoform 2." evidence="8">
    <location>
        <begin position="233"/>
        <end position="301"/>
    </location>
</feature>
<feature type="sequence variant" id="VAR_003817" description="In allele HOXB1*B." evidence="3 4">
    <original>A</original>
    <variation>AHSA</variation>
    <location>
        <position position="27"/>
    </location>
</feature>
<feature type="sequence variant" id="VAR_055959" description="In dbSNP:rs35254561.">
    <original>T</original>
    <variation>N</variation>
    <location>
        <position position="71"/>
    </location>
</feature>
<feature type="sequence variant" id="VAR_055960" description="In dbSNP:rs12939811.">
    <original>Q</original>
    <variation>H</variation>
    <location>
        <position position="103"/>
    </location>
</feature>
<feature type="sequence variant" id="VAR_068723" description="In HCFP3; decreased transactivation activity at low DNA concentrations; increased transactivation activity at high DNA concentrations compared to wild-type; dbSNP:rs387907239." evidence="5">
    <original>R</original>
    <variation>C</variation>
    <location>
        <position position="207"/>
    </location>
</feature>
<feature type="sequence variant" id="VAR_058129" description="In dbSNP:rs7226137." evidence="6 7">
    <original>E</original>
    <variation>G</variation>
    <location>
        <position position="265"/>
    </location>
</feature>
<feature type="helix" evidence="10">
    <location>
        <begin position="181"/>
        <end position="184"/>
    </location>
</feature>
<feature type="helix" evidence="10">
    <location>
        <begin position="212"/>
        <end position="222"/>
    </location>
</feature>
<feature type="helix" evidence="10">
    <location>
        <begin position="230"/>
        <end position="240"/>
    </location>
</feature>
<feature type="helix" evidence="10">
    <location>
        <begin position="244"/>
        <end position="262"/>
    </location>
</feature>
<dbReference type="EMBL" id="X16666">
    <property type="protein sequence ID" value="CAA34656.1"/>
    <property type="molecule type" value="mRNA"/>
</dbReference>
<dbReference type="EMBL" id="AC103702">
    <property type="status" value="NOT_ANNOTATED_CDS"/>
    <property type="molecule type" value="Genomic_DNA"/>
</dbReference>
<dbReference type="EMBL" id="BC096191">
    <property type="protein sequence ID" value="AAH96191.1"/>
    <property type="molecule type" value="mRNA"/>
</dbReference>
<dbReference type="EMBL" id="BC099633">
    <property type="protein sequence ID" value="AAH99633.1"/>
    <property type="molecule type" value="mRNA"/>
</dbReference>
<dbReference type="CCDS" id="CCDS32675.1">
    <molecule id="P14653-1"/>
</dbReference>
<dbReference type="PIR" id="S07541">
    <property type="entry name" value="WJHU2I"/>
</dbReference>
<dbReference type="RefSeq" id="NP_002135.2">
    <molecule id="P14653-1"/>
    <property type="nucleotide sequence ID" value="NM_002144.3"/>
</dbReference>
<dbReference type="PDB" id="1B72">
    <property type="method" value="X-ray"/>
    <property type="resolution" value="2.35 A"/>
    <property type="chains" value="A=170-264"/>
</dbReference>
<dbReference type="PDBsum" id="1B72"/>
<dbReference type="SMR" id="P14653"/>
<dbReference type="BioGRID" id="109451">
    <property type="interactions" value="42"/>
</dbReference>
<dbReference type="CORUM" id="P14653"/>
<dbReference type="DIP" id="DIP-6106N"/>
<dbReference type="ELM" id="P14653"/>
<dbReference type="FunCoup" id="P14653">
    <property type="interactions" value="713"/>
</dbReference>
<dbReference type="IntAct" id="P14653">
    <property type="interactions" value="29"/>
</dbReference>
<dbReference type="STRING" id="9606.ENSP00000355140"/>
<dbReference type="GlyGen" id="P14653">
    <property type="glycosylation" value="3 sites, 1 O-linked glycan (3 sites)"/>
</dbReference>
<dbReference type="iPTMnet" id="P14653"/>
<dbReference type="PhosphoSitePlus" id="P14653"/>
<dbReference type="BioMuta" id="HOXB1"/>
<dbReference type="DMDM" id="251757285"/>
<dbReference type="MassIVE" id="P14653"/>
<dbReference type="PaxDb" id="9606-ENSP00000355140"/>
<dbReference type="PeptideAtlas" id="P14653"/>
<dbReference type="Antibodypedia" id="30258">
    <property type="antibodies" value="349 antibodies from 35 providers"/>
</dbReference>
<dbReference type="DNASU" id="3211"/>
<dbReference type="Ensembl" id="ENST00000239174.7">
    <molecule id="P14653-1"/>
    <property type="protein sequence ID" value="ENSP00000355140.5"/>
    <property type="gene ID" value="ENSG00000120094.9"/>
</dbReference>
<dbReference type="Ensembl" id="ENST00000577092.1">
    <molecule id="P14653-2"/>
    <property type="protein sequence ID" value="ENSP00000459066.1"/>
    <property type="gene ID" value="ENSG00000120094.9"/>
</dbReference>
<dbReference type="GeneID" id="3211"/>
<dbReference type="KEGG" id="hsa:3211"/>
<dbReference type="MANE-Select" id="ENST00000239174.7">
    <property type="protein sequence ID" value="ENSP00000355140.5"/>
    <property type="RefSeq nucleotide sequence ID" value="NM_002144.4"/>
    <property type="RefSeq protein sequence ID" value="NP_002135.2"/>
</dbReference>
<dbReference type="UCSC" id="uc002ink.2">
    <molecule id="P14653-1"/>
    <property type="organism name" value="human"/>
</dbReference>
<dbReference type="AGR" id="HGNC:5111"/>
<dbReference type="CTD" id="3211"/>
<dbReference type="DisGeNET" id="3211"/>
<dbReference type="GeneCards" id="HOXB1"/>
<dbReference type="HGNC" id="HGNC:5111">
    <property type="gene designation" value="HOXB1"/>
</dbReference>
<dbReference type="HPA" id="ENSG00000120094">
    <property type="expression patterns" value="Not detected"/>
</dbReference>
<dbReference type="MalaCards" id="HOXB1"/>
<dbReference type="MIM" id="142968">
    <property type="type" value="gene"/>
</dbReference>
<dbReference type="MIM" id="614744">
    <property type="type" value="phenotype"/>
</dbReference>
<dbReference type="neXtProt" id="NX_P14653"/>
<dbReference type="OpenTargets" id="ENSG00000120094"/>
<dbReference type="Orphanet" id="306530">
    <property type="disease" value="Congenital hereditary facial paralysis-variable hearing loss syndrome"/>
</dbReference>
<dbReference type="PharmGKB" id="PA29387"/>
<dbReference type="VEuPathDB" id="HostDB:ENSG00000120094"/>
<dbReference type="eggNOG" id="KOG0489">
    <property type="taxonomic scope" value="Eukaryota"/>
</dbReference>
<dbReference type="GeneTree" id="ENSGT00940000159503"/>
<dbReference type="HOGENOM" id="CLU_058839_1_0_1"/>
<dbReference type="InParanoid" id="P14653"/>
<dbReference type="OMA" id="ACNPSYG"/>
<dbReference type="OrthoDB" id="6159439at2759"/>
<dbReference type="PAN-GO" id="P14653">
    <property type="GO annotations" value="4 GO annotations based on evolutionary models"/>
</dbReference>
<dbReference type="PhylomeDB" id="P14653"/>
<dbReference type="TreeFam" id="TF317730"/>
<dbReference type="PathwayCommons" id="P14653"/>
<dbReference type="Reactome" id="R-HSA-5617472">
    <property type="pathway name" value="Activation of anterior HOX genes in hindbrain development during early embryogenesis"/>
</dbReference>
<dbReference type="SignaLink" id="P14653"/>
<dbReference type="SIGNOR" id="P14653"/>
<dbReference type="BioGRID-ORCS" id="3211">
    <property type="hits" value="11 hits in 1165 CRISPR screens"/>
</dbReference>
<dbReference type="EvolutionaryTrace" id="P14653"/>
<dbReference type="GeneWiki" id="HOXB1"/>
<dbReference type="GenomeRNAi" id="3211"/>
<dbReference type="Pharos" id="P14653">
    <property type="development level" value="Tbio"/>
</dbReference>
<dbReference type="PRO" id="PR:P14653"/>
<dbReference type="Proteomes" id="UP000005640">
    <property type="component" value="Chromosome 17"/>
</dbReference>
<dbReference type="RNAct" id="P14653">
    <property type="molecule type" value="protein"/>
</dbReference>
<dbReference type="Bgee" id="ENSG00000120094">
    <property type="expression patterns" value="Expressed in primordial germ cell in gonad and 21 other cell types or tissues"/>
</dbReference>
<dbReference type="GO" id="GO:0000785">
    <property type="term" value="C:chromatin"/>
    <property type="evidence" value="ECO:0000247"/>
    <property type="project" value="NTNU_SB"/>
</dbReference>
<dbReference type="GO" id="GO:0005654">
    <property type="term" value="C:nucleoplasm"/>
    <property type="evidence" value="ECO:0000314"/>
    <property type="project" value="HPA"/>
</dbReference>
<dbReference type="GO" id="GO:0005634">
    <property type="term" value="C:nucleus"/>
    <property type="evidence" value="ECO:0000318"/>
    <property type="project" value="GO_Central"/>
</dbReference>
<dbReference type="GO" id="GO:0003677">
    <property type="term" value="F:DNA binding"/>
    <property type="evidence" value="ECO:0000314"/>
    <property type="project" value="UniProtKB"/>
</dbReference>
<dbReference type="GO" id="GO:0001228">
    <property type="term" value="F:DNA-binding transcription activator activity, RNA polymerase II-specific"/>
    <property type="evidence" value="ECO:0000314"/>
    <property type="project" value="NTNU_SB"/>
</dbReference>
<dbReference type="GO" id="GO:0000981">
    <property type="term" value="F:DNA-binding transcription factor activity, RNA polymerase II-specific"/>
    <property type="evidence" value="ECO:0000247"/>
    <property type="project" value="NTNU_SB"/>
</dbReference>
<dbReference type="GO" id="GO:0019904">
    <property type="term" value="F:protein domain specific binding"/>
    <property type="evidence" value="ECO:0000353"/>
    <property type="project" value="UniProtKB"/>
</dbReference>
<dbReference type="GO" id="GO:0000978">
    <property type="term" value="F:RNA polymerase II cis-regulatory region sequence-specific DNA binding"/>
    <property type="evidence" value="ECO:0000314"/>
    <property type="project" value="NTNU_SB"/>
</dbReference>
<dbReference type="GO" id="GO:0000977">
    <property type="term" value="F:RNA polymerase II transcription regulatory region sequence-specific DNA binding"/>
    <property type="evidence" value="ECO:0000314"/>
    <property type="project" value="NTNU_SB"/>
</dbReference>
<dbReference type="GO" id="GO:1990837">
    <property type="term" value="F:sequence-specific double-stranded DNA binding"/>
    <property type="evidence" value="ECO:0000314"/>
    <property type="project" value="ARUK-UCL"/>
</dbReference>
<dbReference type="GO" id="GO:0048646">
    <property type="term" value="P:anatomical structure formation involved in morphogenesis"/>
    <property type="evidence" value="ECO:0007669"/>
    <property type="project" value="Ensembl"/>
</dbReference>
<dbReference type="GO" id="GO:0009952">
    <property type="term" value="P:anterior/posterior pattern specification"/>
    <property type="evidence" value="ECO:0007669"/>
    <property type="project" value="Ensembl"/>
</dbReference>
<dbReference type="GO" id="GO:0048704">
    <property type="term" value="P:embryonic skeletal system morphogenesis"/>
    <property type="evidence" value="ECO:0007669"/>
    <property type="project" value="Ensembl"/>
</dbReference>
<dbReference type="GO" id="GO:0021612">
    <property type="term" value="P:facial nerve structural organization"/>
    <property type="evidence" value="ECO:0007669"/>
    <property type="project" value="Ensembl"/>
</dbReference>
<dbReference type="GO" id="GO:0021754">
    <property type="term" value="P:facial nucleus development"/>
    <property type="evidence" value="ECO:0007669"/>
    <property type="project" value="Ensembl"/>
</dbReference>
<dbReference type="GO" id="GO:0007389">
    <property type="term" value="P:pattern specification process"/>
    <property type="evidence" value="ECO:0000304"/>
    <property type="project" value="UniProtKB"/>
</dbReference>
<dbReference type="GO" id="GO:0045944">
    <property type="term" value="P:positive regulation of transcription by RNA polymerase II"/>
    <property type="evidence" value="ECO:0000314"/>
    <property type="project" value="NTNU_SB"/>
</dbReference>
<dbReference type="GO" id="GO:0006355">
    <property type="term" value="P:regulation of DNA-templated transcription"/>
    <property type="evidence" value="ECO:0000304"/>
    <property type="project" value="UniProtKB"/>
</dbReference>
<dbReference type="GO" id="GO:0006357">
    <property type="term" value="P:regulation of transcription by RNA polymerase II"/>
    <property type="evidence" value="ECO:0000318"/>
    <property type="project" value="GO_Central"/>
</dbReference>
<dbReference type="GO" id="GO:0021570">
    <property type="term" value="P:rhombomere 4 development"/>
    <property type="evidence" value="ECO:0007669"/>
    <property type="project" value="Ensembl"/>
</dbReference>
<dbReference type="GO" id="GO:0021571">
    <property type="term" value="P:rhombomere 5 development"/>
    <property type="evidence" value="ECO:0007669"/>
    <property type="project" value="Ensembl"/>
</dbReference>
<dbReference type="CDD" id="cd00086">
    <property type="entry name" value="homeodomain"/>
    <property type="match status" value="1"/>
</dbReference>
<dbReference type="DisProt" id="DP02414"/>
<dbReference type="FunFam" id="1.10.10.60:FF:000113">
    <property type="entry name" value="homeobox protein Hox-B1"/>
    <property type="match status" value="1"/>
</dbReference>
<dbReference type="Gene3D" id="1.10.10.60">
    <property type="entry name" value="Homeodomain-like"/>
    <property type="match status" value="1"/>
</dbReference>
<dbReference type="IDEAL" id="IID00142"/>
<dbReference type="InterPro" id="IPR001356">
    <property type="entry name" value="HD"/>
</dbReference>
<dbReference type="InterPro" id="IPR020479">
    <property type="entry name" value="HD_metazoa"/>
</dbReference>
<dbReference type="InterPro" id="IPR017970">
    <property type="entry name" value="Homeobox_CS"/>
</dbReference>
<dbReference type="InterPro" id="IPR009057">
    <property type="entry name" value="Homeodomain-like_sf"/>
</dbReference>
<dbReference type="InterPro" id="IPR046327">
    <property type="entry name" value="HXA1/B1/D1"/>
</dbReference>
<dbReference type="PANTHER" id="PTHR45946:SF5">
    <property type="entry name" value="HOMEOBOX PROTEIN HOX-B1"/>
    <property type="match status" value="1"/>
</dbReference>
<dbReference type="PANTHER" id="PTHR45946">
    <property type="entry name" value="HOMEOBOX PROTEIN ROUGH-RELATED"/>
    <property type="match status" value="1"/>
</dbReference>
<dbReference type="Pfam" id="PF00046">
    <property type="entry name" value="Homeodomain"/>
    <property type="match status" value="1"/>
</dbReference>
<dbReference type="PRINTS" id="PR00024">
    <property type="entry name" value="HOMEOBOX"/>
</dbReference>
<dbReference type="SMART" id="SM00389">
    <property type="entry name" value="HOX"/>
    <property type="match status" value="1"/>
</dbReference>
<dbReference type="SUPFAM" id="SSF46689">
    <property type="entry name" value="Homeodomain-like"/>
    <property type="match status" value="1"/>
</dbReference>
<dbReference type="PROSITE" id="PS00027">
    <property type="entry name" value="HOMEOBOX_1"/>
    <property type="match status" value="1"/>
</dbReference>
<dbReference type="PROSITE" id="PS50071">
    <property type="entry name" value="HOMEOBOX_2"/>
    <property type="match status" value="1"/>
</dbReference>
<accession>P14653</accession>
<accession>Q4VB03</accession>
<keyword id="KW-0002">3D-structure</keyword>
<keyword id="KW-0025">Alternative splicing</keyword>
<keyword id="KW-0217">Developmental protein</keyword>
<keyword id="KW-0225">Disease variant</keyword>
<keyword id="KW-0238">DNA-binding</keyword>
<keyword id="KW-0371">Homeobox</keyword>
<keyword id="KW-0539">Nucleus</keyword>
<keyword id="KW-1185">Reference proteome</keyword>
<keyword id="KW-0804">Transcription</keyword>
<keyword id="KW-0805">Transcription regulation</keyword>
<comment type="function">
    <text>Sequence-specific transcription factor which is part of a developmental regulatory system that provides cells with specific positional identities on the anterior-posterior axis. Acts on the anterior body structures.</text>
</comment>
<comment type="subcellular location">
    <subcellularLocation>
        <location>Nucleus</location>
    </subcellularLocation>
</comment>
<comment type="alternative products">
    <event type="alternative splicing"/>
    <isoform>
        <id>P14653-1</id>
        <name>1</name>
        <sequence type="displayed"/>
    </isoform>
    <isoform>
        <id>P14653-2</id>
        <name>2</name>
        <sequence type="described" ref="VSP_056813 VSP_056814"/>
    </isoform>
</comment>
<comment type="polymorphism">
    <text>The two common alleles; HOX1B*A and HOX1B*B have a frequency of 78.8% and 21.2% respectively.</text>
</comment>
<comment type="disease" evidence="5">
    <disease id="DI-03507">
        <name>Facial paresis, hereditary congenital, 3</name>
        <acronym>HCFP3</acronym>
        <description>A form of facial paresis, a disease characterized by isolated dysfunction of the facial nerve (CN VII). HCFP3 patients are affected by bilateral facial palsy, facial muscle weakness of muscles innervated by CN VII, hearing loss, and strabismus.</description>
        <dbReference type="MIM" id="614744"/>
    </disease>
    <text>The disease is caused by variants affecting the gene represented in this entry.</text>
</comment>
<comment type="similarity">
    <text evidence="9">Belongs to the Antp homeobox family. Labial subfamily.</text>
</comment>
<proteinExistence type="evidence at protein level"/>
<protein>
    <recommendedName>
        <fullName>Homeobox protein Hox-B1</fullName>
    </recommendedName>
    <alternativeName>
        <fullName>Homeobox protein Hox-2I</fullName>
    </alternativeName>
</protein>
<reference key="1">
    <citation type="journal article" date="1989" name="Nucleic Acids Res.">
        <title>The human HOX gene family.</title>
        <authorList>
            <person name="Acampora D."/>
            <person name="D'Esposito M."/>
            <person name="Faiella A."/>
            <person name="Pannese M."/>
            <person name="Migliaccio E."/>
            <person name="Morelli F."/>
            <person name="Stornaiuolo A."/>
            <person name="Nigro V."/>
            <person name="Simeone A."/>
            <person name="Boncinelli E."/>
        </authorList>
    </citation>
    <scope>NUCLEOTIDE SEQUENCE [MRNA] (ISOFORM 1)</scope>
    <scope>VARIANT GLY-265</scope>
</reference>
<reference key="2">
    <citation type="journal article" date="2006" name="Nature">
        <title>DNA sequence of human chromosome 17 and analysis of rearrangement in the human lineage.</title>
        <authorList>
            <person name="Zody M.C."/>
            <person name="Garber M."/>
            <person name="Adams D.J."/>
            <person name="Sharpe T."/>
            <person name="Harrow J."/>
            <person name="Lupski J.R."/>
            <person name="Nicholson C."/>
            <person name="Searle S.M."/>
            <person name="Wilming L."/>
            <person name="Young S.K."/>
            <person name="Abouelleil A."/>
            <person name="Allen N.R."/>
            <person name="Bi W."/>
            <person name="Bloom T."/>
            <person name="Borowsky M.L."/>
            <person name="Bugalter B.E."/>
            <person name="Butler J."/>
            <person name="Chang J.L."/>
            <person name="Chen C.-K."/>
            <person name="Cook A."/>
            <person name="Corum B."/>
            <person name="Cuomo C.A."/>
            <person name="de Jong P.J."/>
            <person name="DeCaprio D."/>
            <person name="Dewar K."/>
            <person name="FitzGerald M."/>
            <person name="Gilbert J."/>
            <person name="Gibson R."/>
            <person name="Gnerre S."/>
            <person name="Goldstein S."/>
            <person name="Grafham D.V."/>
            <person name="Grocock R."/>
            <person name="Hafez N."/>
            <person name="Hagopian D.S."/>
            <person name="Hart E."/>
            <person name="Norman C.H."/>
            <person name="Humphray S."/>
            <person name="Jaffe D.B."/>
            <person name="Jones M."/>
            <person name="Kamal M."/>
            <person name="Khodiyar V.K."/>
            <person name="LaButti K."/>
            <person name="Laird G."/>
            <person name="Lehoczky J."/>
            <person name="Liu X."/>
            <person name="Lokyitsang T."/>
            <person name="Loveland J."/>
            <person name="Lui A."/>
            <person name="Macdonald P."/>
            <person name="Major J.E."/>
            <person name="Matthews L."/>
            <person name="Mauceli E."/>
            <person name="McCarroll S.A."/>
            <person name="Mihalev A.H."/>
            <person name="Mudge J."/>
            <person name="Nguyen C."/>
            <person name="Nicol R."/>
            <person name="O'Leary S.B."/>
            <person name="Osoegawa K."/>
            <person name="Schwartz D.C."/>
            <person name="Shaw-Smith C."/>
            <person name="Stankiewicz P."/>
            <person name="Steward C."/>
            <person name="Swarbreck D."/>
            <person name="Venkataraman V."/>
            <person name="Whittaker C.A."/>
            <person name="Yang X."/>
            <person name="Zimmer A.R."/>
            <person name="Bradley A."/>
            <person name="Hubbard T."/>
            <person name="Birren B.W."/>
            <person name="Rogers J."/>
            <person name="Lander E.S."/>
            <person name="Nusbaum C."/>
        </authorList>
    </citation>
    <scope>NUCLEOTIDE SEQUENCE [LARGE SCALE GENOMIC DNA]</scope>
</reference>
<reference key="3">
    <citation type="journal article" date="2004" name="Genome Res.">
        <title>The status, quality, and expansion of the NIH full-length cDNA project: the Mammalian Gene Collection (MGC).</title>
        <authorList>
            <consortium name="The MGC Project Team"/>
        </authorList>
    </citation>
    <scope>NUCLEOTIDE SEQUENCE [LARGE SCALE MRNA] (ISOFORM 2)</scope>
</reference>
<reference key="4">
    <citation type="journal article" date="1989" name="Genome">
        <title>Organization of human class I homeobox genes.</title>
        <authorList>
            <person name="Boncinelli E."/>
            <person name="Acampora D."/>
            <person name="Pannese M."/>
            <person name="D'Esposito M."/>
            <person name="Somma R."/>
            <person name="Gaudino G."/>
            <person name="Stornaiuolo A."/>
            <person name="Cafiero M."/>
            <person name="Faiella A."/>
            <person name="Simeone A."/>
        </authorList>
    </citation>
    <scope>NUCLEOTIDE SEQUENCE [GENOMIC DNA] OF 203-268</scope>
    <scope>VARIANT GLY-265</scope>
</reference>
<reference key="5">
    <citation type="journal article" date="1999" name="Cell">
        <title>Structure of a HoxB1-Pbx1 heterodimer bound to DNA: role of the hexapeptide and a fourth homeodomain helix in complex formation.</title>
        <authorList>
            <person name="Piper D.E."/>
            <person name="Batchelor A.H."/>
            <person name="Chang C.-P."/>
            <person name="Cleary M.L."/>
            <person name="Wolberger C."/>
        </authorList>
    </citation>
    <scope>X-RAY CRYSTALLOGRAPHY (2.35 ANGSTROMS) OF 170-266 IN COMPLEX WITH PBX1</scope>
</reference>
<reference key="6">
    <citation type="journal article" date="1998" name="Hum. Mutat.">
        <title>A genetic polymorphism in the human HOXB1 homeobox gene implying a 9bp tandem repeat in the amino-terminal coding region.</title>
        <authorList>
            <person name="Faiella A."/>
            <person name="Zortea M."/>
            <person name="Barbaria E."/>
            <person name="Albani F."/>
            <person name="Capra V."/>
            <person name="Cama A."/>
            <person name="Boncinelli E."/>
        </authorList>
    </citation>
    <scope>VARIANT HOXB1*B HIS-SER-ALA-27 INS</scope>
</reference>
<reference key="7">
    <citation type="journal article" date="2000" name="Teratology">
        <title>Discovery of allelic variants of HOXA1 and HOXB1: genetic susceptibility to autism spectrum disorders.</title>
        <authorList>
            <person name="Ingram J.L."/>
            <person name="Stodgell C.J."/>
            <person name="Hyman S.L."/>
            <person name="Figlewicz D.A."/>
            <person name="Weitkamp L.R."/>
            <person name="Rodier P.M."/>
        </authorList>
    </citation>
    <scope>VARIANT HOXB1*B HIS-SER-ALA-27 INS</scope>
</reference>
<reference key="8">
    <citation type="journal article" date="2012" name="Am. J. Hum. Genet.">
        <title>HOXB1 founder mutation in humans recapitulates the phenotype of Hoxb1(-/-) mice.</title>
        <authorList>
            <person name="Webb B.D."/>
            <person name="Shaaban S."/>
            <person name="Gaspar H."/>
            <person name="Cunha L.F."/>
            <person name="Schubert C.R."/>
            <person name="Hao K."/>
            <person name="Robson C.D."/>
            <person name="Chan W.M."/>
            <person name="Andrews C."/>
            <person name="Mackinnon S."/>
            <person name="Oystreck D.T."/>
            <person name="Hunter D.G."/>
            <person name="Iacovelli A.J."/>
            <person name="Ye X."/>
            <person name="Camminady A."/>
            <person name="Engle E.C."/>
            <person name="Jabs E.W."/>
        </authorList>
    </citation>
    <scope>VARIANT HCFP3 CYS-207</scope>
    <scope>CHARACTERIZATION OF VARIANT HCFP3 CYS-207</scope>
</reference>